<keyword id="KW-0002">3D-structure</keyword>
<keyword id="KW-0130">Cell adhesion</keyword>
<keyword id="KW-1003">Cell membrane</keyword>
<keyword id="KW-1015">Disulfide bond</keyword>
<keyword id="KW-0325">Glycoprotein</keyword>
<keyword id="KW-0336">GPI-anchor</keyword>
<keyword id="KW-0393">Immunoglobulin domain</keyword>
<keyword id="KW-0449">Lipoprotein</keyword>
<keyword id="KW-0472">Membrane</keyword>
<keyword id="KW-1185">Reference proteome</keyword>
<keyword id="KW-0677">Repeat</keyword>
<keyword id="KW-0732">Signal</keyword>
<name>CNTN1_CHICK</name>
<evidence type="ECO:0000255" key="1"/>
<evidence type="ECO:0000255" key="2">
    <source>
        <dbReference type="PROSITE-ProRule" id="PRU00114"/>
    </source>
</evidence>
<evidence type="ECO:0000255" key="3">
    <source>
        <dbReference type="PROSITE-ProRule" id="PRU00316"/>
    </source>
</evidence>
<evidence type="ECO:0000256" key="4">
    <source>
        <dbReference type="SAM" id="MobiDB-lite"/>
    </source>
</evidence>
<evidence type="ECO:0000269" key="5">
    <source>
    </source>
</evidence>
<evidence type="ECO:0000305" key="6"/>
<evidence type="ECO:0007829" key="7">
    <source>
        <dbReference type="PDB" id="5E53"/>
    </source>
</evidence>
<organism>
    <name type="scientific">Gallus gallus</name>
    <name type="common">Chicken</name>
    <dbReference type="NCBI Taxonomy" id="9031"/>
    <lineage>
        <taxon>Eukaryota</taxon>
        <taxon>Metazoa</taxon>
        <taxon>Chordata</taxon>
        <taxon>Craniata</taxon>
        <taxon>Vertebrata</taxon>
        <taxon>Euteleostomi</taxon>
        <taxon>Archelosauria</taxon>
        <taxon>Archosauria</taxon>
        <taxon>Dinosauria</taxon>
        <taxon>Saurischia</taxon>
        <taxon>Theropoda</taxon>
        <taxon>Coelurosauria</taxon>
        <taxon>Aves</taxon>
        <taxon>Neognathae</taxon>
        <taxon>Galloanserae</taxon>
        <taxon>Galliformes</taxon>
        <taxon>Phasianidae</taxon>
        <taxon>Phasianinae</taxon>
        <taxon>Gallus</taxon>
    </lineage>
</organism>
<protein>
    <recommendedName>
        <fullName>Contactin-1</fullName>
    </recommendedName>
    <alternativeName>
        <fullName>Neural cell recognition molecule F11</fullName>
    </alternativeName>
</protein>
<gene>
    <name type="primary">CNTN1</name>
</gene>
<reference key="1">
    <citation type="journal article" date="1989" name="Neuron">
        <title>Neural cell recognition molecule F11: homology with fibronectin type III and immunoglobulin type C domains.</title>
        <authorList>
            <person name="Bruemmendorf T."/>
            <person name="Wolff J.M."/>
            <person name="Rainer F."/>
            <person name="Rathjer F.G."/>
        </authorList>
    </citation>
    <scope>NUCLEOTIDE SEQUENCE [MRNA]</scope>
</reference>
<reference key="2">
    <citation type="journal article" date="1988" name="J. Cell Biol.">
        <title>Sequence of contactin, a 130-kD glycoprotein concentrated in areas of interneuronal contact, defines a new member of the immunoglobulin supergene family in the nervous system.</title>
        <authorList>
            <person name="Ranscht B."/>
            <person name="Dours M.T."/>
        </authorList>
    </citation>
    <scope>NUCLEOTIDE SEQUENCE [MRNA]</scope>
    <source>
        <strain>White leghorn</strain>
    </source>
</reference>
<reference key="3">
    <citation type="journal article" date="1989" name="Biochem. Biophys. Res. Commun.">
        <title>Neural cell recognition molecule F11: membrane interaction by covalently attached phosphatidylinositol.</title>
        <authorList>
            <person name="Wolff J.M."/>
            <person name="Bruemmendorf T."/>
            <person name="Rathjen F.G."/>
        </authorList>
    </citation>
    <scope>GPI-ANCHOR</scope>
</reference>
<reference key="4">
    <citation type="journal article" date="1995" name="J. Cell Biol.">
        <title>Characterization of functional domains of the tenascin-R (restrictin) polypeptide: cell attachment site, binding with F11, and enhancement of F11-mediated neurite outgrowth by tenascin-R.</title>
        <authorList>
            <person name="Noerenberg U."/>
            <person name="Hubert M."/>
            <person name="Bruemmendorf T."/>
            <person name="Tarnok A."/>
            <person name="Rathjen F.G."/>
        </authorList>
    </citation>
    <scope>INTERACTION WITH TNR</scope>
    <scope>FUNCTION</scope>
</reference>
<feature type="signal peptide">
    <location>
        <begin position="1"/>
        <end position="19"/>
    </location>
</feature>
<feature type="chain" id="PRO_0000014691" description="Contactin-1">
    <location>
        <begin position="20"/>
        <end position="984"/>
    </location>
</feature>
<feature type="propeptide" id="PRO_0000014692" description="Removed in mature form" evidence="1">
    <location>
        <begin position="985"/>
        <end position="1010"/>
    </location>
</feature>
<feature type="domain" description="Ig-like C2-type 1">
    <location>
        <begin position="33"/>
        <end position="123"/>
    </location>
</feature>
<feature type="domain" description="Ig-like C2-type 2">
    <location>
        <begin position="132"/>
        <end position="215"/>
    </location>
</feature>
<feature type="domain" description="Ig-like C2-type 3">
    <location>
        <begin position="232"/>
        <end position="317"/>
    </location>
</feature>
<feature type="domain" description="Ig-like C2-type 4">
    <location>
        <begin position="322"/>
        <end position="398"/>
    </location>
</feature>
<feature type="domain" description="Ig-like C2-type 5">
    <location>
        <begin position="404"/>
        <end position="491"/>
    </location>
</feature>
<feature type="domain" description="Ig-like C2-type 6">
    <location>
        <begin position="496"/>
        <end position="592"/>
    </location>
</feature>
<feature type="domain" description="Fibronectin type-III 1" evidence="3">
    <location>
        <begin position="597"/>
        <end position="695"/>
    </location>
</feature>
<feature type="domain" description="Fibronectin type-III 2" evidence="3">
    <location>
        <begin position="700"/>
        <end position="797"/>
    </location>
</feature>
<feature type="domain" description="Fibronectin type-III 3" evidence="3">
    <location>
        <begin position="802"/>
        <end position="897"/>
    </location>
</feature>
<feature type="domain" description="Fibronectin type-III 4" evidence="3">
    <location>
        <begin position="899"/>
        <end position="990"/>
    </location>
</feature>
<feature type="region of interest" description="Disordered" evidence="4">
    <location>
        <begin position="679"/>
        <end position="708"/>
    </location>
</feature>
<feature type="compositionally biased region" description="Polar residues" evidence="4">
    <location>
        <begin position="679"/>
        <end position="689"/>
    </location>
</feature>
<feature type="lipid moiety-binding region" description="GPI-anchor amidated serine" evidence="1">
    <location>
        <position position="984"/>
    </location>
</feature>
<feature type="glycosylation site" description="N-linked (GlcNAc...) asparagine" evidence="1">
    <location>
        <position position="200"/>
    </location>
</feature>
<feature type="glycosylation site" description="N-linked (GlcNAc...) asparagine" evidence="1">
    <location>
        <position position="249"/>
    </location>
</feature>
<feature type="glycosylation site" description="N-linked (GlcNAc...) asparagine" evidence="1">
    <location>
        <position position="329"/>
    </location>
</feature>
<feature type="glycosylation site" description="N-linked (GlcNAc...) asparagine" evidence="1">
    <location>
        <position position="448"/>
    </location>
</feature>
<feature type="glycosylation site" description="N-linked (GlcNAc...) asparagine" evidence="1">
    <location>
        <position position="464"/>
    </location>
</feature>
<feature type="glycosylation site" description="N-linked (GlcNAc...) asparagine" evidence="1">
    <location>
        <position position="485"/>
    </location>
</feature>
<feature type="glycosylation site" description="N-linked (GlcNAc...) asparagine" evidence="1">
    <location>
        <position position="512"/>
    </location>
</feature>
<feature type="glycosylation site" description="N-linked (GlcNAc...) asparagine" evidence="1">
    <location>
        <position position="582"/>
    </location>
</feature>
<feature type="glycosylation site" description="N-linked (GlcNAc...) asparagine" evidence="1">
    <location>
        <position position="924"/>
    </location>
</feature>
<feature type="disulfide bond" evidence="2">
    <location>
        <begin position="57"/>
        <end position="106"/>
    </location>
</feature>
<feature type="disulfide bond" evidence="2">
    <location>
        <begin position="150"/>
        <end position="203"/>
    </location>
</feature>
<feature type="disulfide bond" evidence="2">
    <location>
        <begin position="254"/>
        <end position="301"/>
    </location>
</feature>
<feature type="disulfide bond" evidence="2">
    <location>
        <begin position="343"/>
        <end position="382"/>
    </location>
</feature>
<feature type="disulfide bond" evidence="2">
    <location>
        <begin position="427"/>
        <end position="475"/>
    </location>
</feature>
<feature type="disulfide bond" evidence="2">
    <location>
        <begin position="517"/>
        <end position="574"/>
    </location>
</feature>
<feature type="sequence conflict" description="In Ref. 2; CAA68753." evidence="6" ref="2">
    <original>S</original>
    <variation>N</variation>
    <location>
        <position position="971"/>
    </location>
</feature>
<feature type="strand" evidence="7">
    <location>
        <begin position="601"/>
        <end position="606"/>
    </location>
</feature>
<feature type="strand" evidence="7">
    <location>
        <begin position="608"/>
        <end position="615"/>
    </location>
</feature>
<feature type="strand" evidence="7">
    <location>
        <begin position="629"/>
        <end position="633"/>
    </location>
</feature>
<feature type="strand" evidence="7">
    <location>
        <begin position="645"/>
        <end position="649"/>
    </location>
</feature>
<feature type="strand" evidence="7">
    <location>
        <begin position="655"/>
        <end position="661"/>
    </location>
</feature>
<feature type="strand" evidence="7">
    <location>
        <begin position="667"/>
        <end position="673"/>
    </location>
</feature>
<feature type="strand" evidence="7">
    <location>
        <begin position="702"/>
        <end position="706"/>
    </location>
</feature>
<feature type="strand" evidence="7">
    <location>
        <begin position="713"/>
        <end position="719"/>
    </location>
</feature>
<feature type="helix" evidence="7">
    <location>
        <begin position="723"/>
        <end position="725"/>
    </location>
</feature>
<feature type="strand" evidence="7">
    <location>
        <begin position="728"/>
        <end position="730"/>
    </location>
</feature>
<feature type="strand" evidence="7">
    <location>
        <begin position="732"/>
        <end position="739"/>
    </location>
</feature>
<feature type="strand" evidence="7">
    <location>
        <begin position="746"/>
        <end position="750"/>
    </location>
</feature>
<feature type="strand" evidence="7">
    <location>
        <begin position="757"/>
        <end position="761"/>
    </location>
</feature>
<feature type="strand" evidence="7">
    <location>
        <begin position="770"/>
        <end position="779"/>
    </location>
</feature>
<feature type="strand" evidence="7">
    <location>
        <begin position="790"/>
        <end position="793"/>
    </location>
</feature>
<feature type="strand" evidence="7">
    <location>
        <begin position="804"/>
        <end position="810"/>
    </location>
</feature>
<feature type="strand" evidence="7">
    <location>
        <begin position="812"/>
        <end position="814"/>
    </location>
</feature>
<feature type="strand" evidence="7">
    <location>
        <begin position="816"/>
        <end position="821"/>
    </location>
</feature>
<feature type="strand" evidence="7">
    <location>
        <begin position="830"/>
        <end position="837"/>
    </location>
</feature>
<feature type="helix" evidence="7">
    <location>
        <begin position="842"/>
        <end position="844"/>
    </location>
</feature>
<feature type="strand" evidence="7">
    <location>
        <begin position="846"/>
        <end position="851"/>
    </location>
</feature>
<feature type="strand" evidence="7">
    <location>
        <begin position="855"/>
        <end position="859"/>
    </location>
</feature>
<feature type="strand" evidence="7">
    <location>
        <begin position="867"/>
        <end position="870"/>
    </location>
</feature>
<feature type="strand" evidence="7">
    <location>
        <begin position="873"/>
        <end position="876"/>
    </location>
</feature>
<feature type="strand" evidence="7">
    <location>
        <begin position="887"/>
        <end position="890"/>
    </location>
</feature>
<proteinExistence type="evidence at protein level"/>
<dbReference type="EMBL" id="X14877">
    <property type="protein sequence ID" value="CAA33018.1"/>
    <property type="molecule type" value="mRNA"/>
</dbReference>
<dbReference type="EMBL" id="Y00813">
    <property type="protein sequence ID" value="CAA68753.1"/>
    <property type="status" value="ALT_FRAME"/>
    <property type="molecule type" value="mRNA"/>
</dbReference>
<dbReference type="PIR" id="S01998">
    <property type="entry name" value="S01998"/>
</dbReference>
<dbReference type="RefSeq" id="NP_001004381.3">
    <property type="nucleotide sequence ID" value="NM_001004381.3"/>
</dbReference>
<dbReference type="PDB" id="5E53">
    <property type="method" value="X-ray"/>
    <property type="resolution" value="2.50 A"/>
    <property type="chains" value="A/B/C/D=593-893"/>
</dbReference>
<dbReference type="PDBsum" id="5E53"/>
<dbReference type="SMR" id="P14781"/>
<dbReference type="BioGRID" id="679083">
    <property type="interactions" value="1"/>
</dbReference>
<dbReference type="FunCoup" id="P14781">
    <property type="interactions" value="331"/>
</dbReference>
<dbReference type="IntAct" id="P14781">
    <property type="interactions" value="3"/>
</dbReference>
<dbReference type="MINT" id="P14781"/>
<dbReference type="STRING" id="9031.ENSGALP00000060237"/>
<dbReference type="GlyCosmos" id="P14781">
    <property type="glycosylation" value="9 sites, No reported glycans"/>
</dbReference>
<dbReference type="GlyGen" id="P14781">
    <property type="glycosylation" value="9 sites"/>
</dbReference>
<dbReference type="PaxDb" id="9031-ENSGALP00000038042"/>
<dbReference type="GeneID" id="417786"/>
<dbReference type="KEGG" id="gga:417786"/>
<dbReference type="CTD" id="1272"/>
<dbReference type="VEuPathDB" id="HostDB:geneid_417786"/>
<dbReference type="eggNOG" id="KOG3513">
    <property type="taxonomic scope" value="Eukaryota"/>
</dbReference>
<dbReference type="HOGENOM" id="CLU_005756_0_0_1"/>
<dbReference type="InParanoid" id="P14781"/>
<dbReference type="OrthoDB" id="6138780at2759"/>
<dbReference type="PhylomeDB" id="P14781"/>
<dbReference type="PRO" id="PR:P14781"/>
<dbReference type="Proteomes" id="UP000000539">
    <property type="component" value="Chromosome 1"/>
</dbReference>
<dbReference type="Bgee" id="ENSGALG00000009523">
    <property type="expression patterns" value="Expressed in cerebellum and 12 other cell types or tissues"/>
</dbReference>
<dbReference type="GO" id="GO:0030424">
    <property type="term" value="C:axon"/>
    <property type="evidence" value="ECO:0000318"/>
    <property type="project" value="GO_Central"/>
</dbReference>
<dbReference type="GO" id="GO:0005886">
    <property type="term" value="C:plasma membrane"/>
    <property type="evidence" value="ECO:0000318"/>
    <property type="project" value="GO_Central"/>
</dbReference>
<dbReference type="GO" id="GO:0098552">
    <property type="term" value="C:side of membrane"/>
    <property type="evidence" value="ECO:0007669"/>
    <property type="project" value="UniProtKB-KW"/>
</dbReference>
<dbReference type="GO" id="GO:0098632">
    <property type="term" value="F:cell-cell adhesion mediator activity"/>
    <property type="evidence" value="ECO:0000318"/>
    <property type="project" value="GO_Central"/>
</dbReference>
<dbReference type="GO" id="GO:0007411">
    <property type="term" value="P:axon guidance"/>
    <property type="evidence" value="ECO:0000318"/>
    <property type="project" value="GO_Central"/>
</dbReference>
<dbReference type="GO" id="GO:0098609">
    <property type="term" value="P:cell-cell adhesion"/>
    <property type="evidence" value="ECO:0000318"/>
    <property type="project" value="GO_Central"/>
</dbReference>
<dbReference type="CDD" id="cd00063">
    <property type="entry name" value="FN3"/>
    <property type="match status" value="4"/>
</dbReference>
<dbReference type="CDD" id="cd05727">
    <property type="entry name" value="Ig2_Contactin-2-like"/>
    <property type="match status" value="1"/>
</dbReference>
<dbReference type="CDD" id="cd05852">
    <property type="entry name" value="Ig5_Contactin-1"/>
    <property type="match status" value="1"/>
</dbReference>
<dbReference type="CDD" id="cd04970">
    <property type="entry name" value="Ig6_Contactin"/>
    <property type="match status" value="1"/>
</dbReference>
<dbReference type="CDD" id="cd05851">
    <property type="entry name" value="IgI_3_Contactin-1"/>
    <property type="match status" value="1"/>
</dbReference>
<dbReference type="FunFam" id="2.60.40.10:FF:000035">
    <property type="entry name" value="Contactin 1"/>
    <property type="match status" value="1"/>
</dbReference>
<dbReference type="FunFam" id="2.60.40.10:FF:000044">
    <property type="entry name" value="Contactin 1"/>
    <property type="match status" value="1"/>
</dbReference>
<dbReference type="FunFam" id="2.60.40.10:FF:000047">
    <property type="entry name" value="Contactin 1"/>
    <property type="match status" value="1"/>
</dbReference>
<dbReference type="FunFam" id="2.60.40.10:FF:000052">
    <property type="entry name" value="Contactin 1"/>
    <property type="match status" value="1"/>
</dbReference>
<dbReference type="FunFam" id="2.60.40.10:FF:000054">
    <property type="entry name" value="Contactin 1"/>
    <property type="match status" value="1"/>
</dbReference>
<dbReference type="FunFam" id="2.60.40.10:FF:000064">
    <property type="entry name" value="Contactin 1"/>
    <property type="match status" value="1"/>
</dbReference>
<dbReference type="FunFam" id="2.60.40.10:FF:000526">
    <property type="entry name" value="Contactin 1"/>
    <property type="match status" value="1"/>
</dbReference>
<dbReference type="FunFam" id="2.60.40.10:FF:000004">
    <property type="entry name" value="DCC isoform 1"/>
    <property type="match status" value="2"/>
</dbReference>
<dbReference type="FunFam" id="2.60.40.10:FF:000005">
    <property type="entry name" value="Neuronal cell adhesion molecule"/>
    <property type="match status" value="1"/>
</dbReference>
<dbReference type="Gene3D" id="2.60.40.10">
    <property type="entry name" value="Immunoglobulins"/>
    <property type="match status" value="10"/>
</dbReference>
<dbReference type="InterPro" id="IPR047102">
    <property type="entry name" value="Contactin-1_2_Ig1"/>
</dbReference>
<dbReference type="InterPro" id="IPR047100">
    <property type="entry name" value="Contactin-1_Ig3"/>
</dbReference>
<dbReference type="InterPro" id="IPR047101">
    <property type="entry name" value="Contactin-1_Ig6"/>
</dbReference>
<dbReference type="InterPro" id="IPR003961">
    <property type="entry name" value="FN3_dom"/>
</dbReference>
<dbReference type="InterPro" id="IPR036116">
    <property type="entry name" value="FN3_sf"/>
</dbReference>
<dbReference type="InterPro" id="IPR007110">
    <property type="entry name" value="Ig-like_dom"/>
</dbReference>
<dbReference type="InterPro" id="IPR036179">
    <property type="entry name" value="Ig-like_dom_sf"/>
</dbReference>
<dbReference type="InterPro" id="IPR013783">
    <property type="entry name" value="Ig-like_fold"/>
</dbReference>
<dbReference type="InterPro" id="IPR013098">
    <property type="entry name" value="Ig_I-set"/>
</dbReference>
<dbReference type="InterPro" id="IPR003599">
    <property type="entry name" value="Ig_sub"/>
</dbReference>
<dbReference type="InterPro" id="IPR003598">
    <property type="entry name" value="Ig_sub2"/>
</dbReference>
<dbReference type="PANTHER" id="PTHR44170:SF10">
    <property type="entry name" value="CONTACTIN-1"/>
    <property type="match status" value="1"/>
</dbReference>
<dbReference type="PANTHER" id="PTHR44170">
    <property type="entry name" value="PROTEIN SIDEKICK"/>
    <property type="match status" value="1"/>
</dbReference>
<dbReference type="Pfam" id="PF00041">
    <property type="entry name" value="fn3"/>
    <property type="match status" value="2"/>
</dbReference>
<dbReference type="Pfam" id="PF07679">
    <property type="entry name" value="I-set"/>
    <property type="match status" value="2"/>
</dbReference>
<dbReference type="Pfam" id="PF13927">
    <property type="entry name" value="Ig_3"/>
    <property type="match status" value="3"/>
</dbReference>
<dbReference type="SMART" id="SM00060">
    <property type="entry name" value="FN3"/>
    <property type="match status" value="4"/>
</dbReference>
<dbReference type="SMART" id="SM00409">
    <property type="entry name" value="IG"/>
    <property type="match status" value="6"/>
</dbReference>
<dbReference type="SMART" id="SM00408">
    <property type="entry name" value="IGc2"/>
    <property type="match status" value="6"/>
</dbReference>
<dbReference type="SUPFAM" id="SSF49265">
    <property type="entry name" value="Fibronectin type III"/>
    <property type="match status" value="2"/>
</dbReference>
<dbReference type="SUPFAM" id="SSF48726">
    <property type="entry name" value="Immunoglobulin"/>
    <property type="match status" value="6"/>
</dbReference>
<dbReference type="PROSITE" id="PS50853">
    <property type="entry name" value="FN3"/>
    <property type="match status" value="4"/>
</dbReference>
<dbReference type="PROSITE" id="PS50835">
    <property type="entry name" value="IG_LIKE"/>
    <property type="match status" value="6"/>
</dbReference>
<accession>P14781</accession>
<accession>P10450</accession>
<sequence>MRFFISHLVTLCFIFCVADSTHFSEEGNKGYGPVFEEQPIDTIYPEESSDGQVSMNCRARAVPFPTYKWKLNNWDIDLTKDRYSMVGGRLVISNPEKSRDAGKYVCVVSNIFGTVRSSEATLSFGYLDPFPPEEHYEVKVREGVGAVLLCEPPYHYPDDLSYRWLLNEFPVFIALDRRRFVSQTNGNLYIANVEASDKGNYSCFVSSPSITKSVFSKFIPLIPQADRAKVYPADIKVKFKDTYALLGQNVTLECFALGNPVPELRWSKYLEPMPATAEISMSGAVLKIFNIQYEDEGLYECEAENYKGKDKHQARVYVQASPEWVEHINDTEKDIGSDLYWPCVATGKPIPTIRWLKNGVSFRKGELRIQGLTFEDAGMYQCIAENAHGIIYANAELKIVASPPTFELNPMKKKILAAKGGRVIIECKPKAAPKPKFSWSKGTELLVNGSRIHIWDDGSLEIINVTKLDEGRYTCFAENNRGKANSTGVLEMTEATRITLAPLNVDVTVGENATMQCIASHDPTLDLTFIWSLNGFVIDFEKEHEHYERNVMIKSNGELLIKNVQLRHAGRYTCTAQTIVDNSSASADLVVRGPPGPPGGIRIEEIRDTAVALTWSRGTDNHSPISKYTIQSKTFLSEEWKDAKTEPSDIEGNMESARVIDLIPWMEYEFRIIATNTLGTGEPSMPSQRIRTEGAPPNVAPSDVGGGGGSNRELTITWMPLSREYHYGNNFGYIVAFKPFGEKEWRRVTVTNPEIGRYVHKDESMPPSTQYQVKVKAFNSKGDGPFSLTAVIYSAQDAPTEVPTDVSVKVLSSSEISVSWHHVTEKSVEGYQIRYWAAHDKEAAAQRVQVSNQEYSTKLENLKPNTRYHIDVSAFNSAGYGPPSRTIDIITRKAPPSQRPRIISSVRSGSRYIITWDHVKAMSNESAVEGYKVLYRPDGQHEGKLFSTGKHTIEVPVPSDGEYVVEVRAHSEGGDGEVAQIKISGATAGVPTLLLGLVLPALGVLAYSGF</sequence>
<comment type="function">
    <text evidence="5">Mediates cell surface interactions during nervous system development. Interaction with TNR enhances the neurite outgrowth.</text>
</comment>
<comment type="subunit">
    <text evidence="5">Interacts with TNR.</text>
</comment>
<comment type="interaction">
    <interactant intactId="EBI-2123196">
        <id>P14781</id>
    </interactant>
    <interactant intactId="EBI-42472651">
        <id>A0A8V0YWD3</id>
        <label>PTPRA</label>
    </interactant>
    <organismsDiffer>false</organismsDiffer>
    <experiments>2</experiments>
</comment>
<comment type="subcellular location">
    <subcellularLocation>
        <location>Cell membrane</location>
        <topology>Lipid-anchor</topology>
        <topology>GPI-anchor</topology>
    </subcellularLocation>
</comment>
<comment type="similarity">
    <text evidence="6">Belongs to the immunoglobulin superfamily. Contactin family.</text>
</comment>
<comment type="sequence caution" evidence="6">
    <conflict type="frameshift">
        <sequence resource="EMBL-CDS" id="CAA68753"/>
    </conflict>
</comment>